<feature type="initiator methionine" description="Removed" evidence="1">
    <location>
        <position position="1"/>
    </location>
</feature>
<feature type="chain" id="PRO_0000221334" description="Histone H3.2">
    <location>
        <begin position="2"/>
        <end position="41" status="greater than"/>
    </location>
</feature>
<feature type="region of interest" description="Disordered" evidence="2">
    <location>
        <begin position="1"/>
        <end position="41"/>
    </location>
</feature>
<feature type="non-terminal residue">
    <location>
        <position position="41"/>
    </location>
</feature>
<comment type="function">
    <text>Core component of nucleosome. Nucleosomes wrap and compact DNA into chromatin, limiting DNA accessibility to the cellular machineries which require DNA as a template. Histones thereby play a central role in transcription regulation, DNA repair, DNA replication and chromosomal stability. DNA accessibility is regulated via a complex set of post-translational modifications of histones, also called histone code, and nucleosome remodeling.</text>
</comment>
<comment type="subunit">
    <text>The nucleosome is a histone octamer containing two molecules each of H2A, H2B, H3 and H4 assembled in one H3-H4 heterotetramer and two H2A-H2B heterodimers. The octamer wraps approximately 147 bp of DNA.</text>
</comment>
<comment type="subcellular location">
    <subcellularLocation>
        <location evidence="1">Nucleus</location>
    </subcellularLocation>
    <subcellularLocation>
        <location evidence="1">Chromosome</location>
    </subcellularLocation>
</comment>
<comment type="similarity">
    <text evidence="3">Belongs to the histone H3 family.</text>
</comment>
<keyword id="KW-0158">Chromosome</keyword>
<keyword id="KW-0238">DNA-binding</keyword>
<keyword id="KW-0544">Nucleosome core</keyword>
<keyword id="KW-0539">Nucleus</keyword>
<accession>P69112</accession>
<accession>P17705</accession>
<evidence type="ECO:0000250" key="1"/>
<evidence type="ECO:0000256" key="2">
    <source>
        <dbReference type="SAM" id="MobiDB-lite"/>
    </source>
</evidence>
<evidence type="ECO:0000305" key="3"/>
<organism>
    <name type="scientific">Tetrahymena capricornis</name>
    <dbReference type="NCBI Taxonomy" id="5895"/>
    <lineage>
        <taxon>Eukaryota</taxon>
        <taxon>Sar</taxon>
        <taxon>Alveolata</taxon>
        <taxon>Ciliophora</taxon>
        <taxon>Intramacronucleata</taxon>
        <taxon>Oligohymenophorea</taxon>
        <taxon>Hymenostomatida</taxon>
        <taxon>Tetrahymenina</taxon>
        <taxon>Tetrahymenidae</taxon>
        <taxon>Tetrahymena</taxon>
    </lineage>
</organism>
<dbReference type="EMBL" id="X17130">
    <property type="protein sequence ID" value="CAA34994.1"/>
    <property type="molecule type" value="Genomic_DNA"/>
</dbReference>
<dbReference type="PIR" id="S10265">
    <property type="entry name" value="S10265"/>
</dbReference>
<dbReference type="GO" id="GO:0000786">
    <property type="term" value="C:nucleosome"/>
    <property type="evidence" value="ECO:0007669"/>
    <property type="project" value="UniProtKB-KW"/>
</dbReference>
<dbReference type="GO" id="GO:0005634">
    <property type="term" value="C:nucleus"/>
    <property type="evidence" value="ECO:0007669"/>
    <property type="project" value="UniProtKB-SubCell"/>
</dbReference>
<dbReference type="GO" id="GO:0003677">
    <property type="term" value="F:DNA binding"/>
    <property type="evidence" value="ECO:0007669"/>
    <property type="project" value="UniProtKB-KW"/>
</dbReference>
<dbReference type="GO" id="GO:0046982">
    <property type="term" value="F:protein heterodimerization activity"/>
    <property type="evidence" value="ECO:0007669"/>
    <property type="project" value="InterPro"/>
</dbReference>
<dbReference type="GO" id="GO:0030527">
    <property type="term" value="F:structural constituent of chromatin"/>
    <property type="evidence" value="ECO:0007669"/>
    <property type="project" value="InterPro"/>
</dbReference>
<dbReference type="Gene3D" id="1.10.20.10">
    <property type="entry name" value="Histone, subunit A"/>
    <property type="match status" value="1"/>
</dbReference>
<dbReference type="InterPro" id="IPR009072">
    <property type="entry name" value="Histone-fold"/>
</dbReference>
<dbReference type="InterPro" id="IPR000164">
    <property type="entry name" value="Histone_H3/CENP-A"/>
</dbReference>
<dbReference type="PANTHER" id="PTHR11426">
    <property type="entry name" value="HISTONE H3"/>
    <property type="match status" value="1"/>
</dbReference>
<dbReference type="PRINTS" id="PR00622">
    <property type="entry name" value="HISTONEH3"/>
</dbReference>
<dbReference type="SUPFAM" id="SSF47113">
    <property type="entry name" value="Histone-fold"/>
    <property type="match status" value="1"/>
</dbReference>
<dbReference type="PROSITE" id="PS00322">
    <property type="entry name" value="HISTONE_H3_1"/>
    <property type="match status" value="1"/>
</dbReference>
<proteinExistence type="inferred from homology"/>
<reference key="1">
    <citation type="journal article" date="1990" name="Nucleic Acids Res.">
        <title>Characterization of the promoter region of Tetrahymena genes.</title>
        <authorList>
            <person name="Brunk C.F."/>
            <person name="Sadler L.A."/>
        </authorList>
    </citation>
    <scope>NUCLEOTIDE SEQUENCE [GENOMIC DNA]</scope>
</reference>
<reference key="2">
    <citation type="journal article" date="1990" name="J. Mol. Evol.">
        <title>Phylogenetic relationships among Tetrahymena species determined using the polymerase chain reaction.</title>
        <authorList>
            <person name="Brunk C.F."/>
            <person name="Kahn R.W."/>
            <person name="Sadler L.A."/>
        </authorList>
    </citation>
    <scope>NUCLEOTIDE SEQUENCE [GENOMIC DNA]</scope>
</reference>
<protein>
    <recommendedName>
        <fullName>Histone H3.2</fullName>
    </recommendedName>
</protein>
<name>H32_TETCA</name>
<sequence>MARTKQTARKSTGAKAPRKQLASKAARKSAPATGGIKKPHR</sequence>